<sequence>MLTIGVLGLQGAVREHIRSIEACGAAGKVIKWPEELKEIDGLILPGGESTTMRRLIDTYQFMKPLQEFAASGKPVFGTCAGLIILAKNIAGTNDAHLGVLDVTVERNSFGRQVDSFEADLTVKGLEGPFTGVFIRAPHILEAGADVEVLSEHNGRIVAAKQGNLLGCSFHPELTDDHRMTKLFVEMVEKHKREAVV</sequence>
<feature type="chain" id="PRO_0000135629" description="Pyridoxal 5'-phosphate synthase subunit PdxT">
    <location>
        <begin position="1"/>
        <end position="196"/>
    </location>
</feature>
<feature type="active site" description="Nucleophile" evidence="1">
    <location>
        <position position="79"/>
    </location>
</feature>
<feature type="active site" description="Charge relay system" evidence="1">
    <location>
        <position position="170"/>
    </location>
</feature>
<feature type="active site" description="Charge relay system" evidence="1">
    <location>
        <position position="172"/>
    </location>
</feature>
<feature type="binding site" evidence="1">
    <location>
        <begin position="47"/>
        <end position="49"/>
    </location>
    <ligand>
        <name>L-glutamine</name>
        <dbReference type="ChEBI" id="CHEBI:58359"/>
    </ligand>
</feature>
<feature type="binding site" evidence="1">
    <location>
        <position position="106"/>
    </location>
    <ligand>
        <name>L-glutamine</name>
        <dbReference type="ChEBI" id="CHEBI:58359"/>
    </ligand>
</feature>
<feature type="binding site" evidence="1">
    <location>
        <begin position="134"/>
        <end position="135"/>
    </location>
    <ligand>
        <name>L-glutamine</name>
        <dbReference type="ChEBI" id="CHEBI:58359"/>
    </ligand>
</feature>
<gene>
    <name evidence="1" type="primary">pdxT</name>
    <name type="ordered locus">BLi00017</name>
    <name type="ordered locus">BL02354</name>
</gene>
<proteinExistence type="inferred from homology"/>
<name>PDXT_BACLD</name>
<evidence type="ECO:0000255" key="1">
    <source>
        <dbReference type="HAMAP-Rule" id="MF_01615"/>
    </source>
</evidence>
<reference key="1">
    <citation type="journal article" date="2004" name="J. Mol. Microbiol. Biotechnol.">
        <title>The complete genome sequence of Bacillus licheniformis DSM13, an organism with great industrial potential.</title>
        <authorList>
            <person name="Veith B."/>
            <person name="Herzberg C."/>
            <person name="Steckel S."/>
            <person name="Feesche J."/>
            <person name="Maurer K.H."/>
            <person name="Ehrenreich P."/>
            <person name="Baeumer S."/>
            <person name="Henne A."/>
            <person name="Liesegang H."/>
            <person name="Merkl R."/>
            <person name="Ehrenreich A."/>
            <person name="Gottschalk G."/>
        </authorList>
    </citation>
    <scope>NUCLEOTIDE SEQUENCE [LARGE SCALE GENOMIC DNA]</scope>
    <source>
        <strain>ATCC 14580 / DSM 13 / JCM 2505 / CCUG 7422 / NBRC 12200 / NCIMB 9375 / NCTC 10341 / NRRL NRS-1264 / Gibson 46</strain>
    </source>
</reference>
<reference key="2">
    <citation type="journal article" date="2004" name="Genome Biol.">
        <title>Complete genome sequence of the industrial bacterium Bacillus licheniformis and comparisons with closely related Bacillus species.</title>
        <authorList>
            <person name="Rey M.W."/>
            <person name="Ramaiya P."/>
            <person name="Nelson B.A."/>
            <person name="Brody-Karpin S.D."/>
            <person name="Zaretsky E.J."/>
            <person name="Tang M."/>
            <person name="Lopez de Leon A."/>
            <person name="Xiang H."/>
            <person name="Gusti V."/>
            <person name="Clausen I.G."/>
            <person name="Olsen P.B."/>
            <person name="Rasmussen M.D."/>
            <person name="Andersen J.T."/>
            <person name="Joergensen P.L."/>
            <person name="Larsen T.S."/>
            <person name="Sorokin A."/>
            <person name="Bolotin A."/>
            <person name="Lapidus A."/>
            <person name="Galleron N."/>
            <person name="Ehrlich S.D."/>
            <person name="Berka R.M."/>
        </authorList>
    </citation>
    <scope>NUCLEOTIDE SEQUENCE [LARGE SCALE GENOMIC DNA]</scope>
    <source>
        <strain>ATCC 14580 / DSM 13 / JCM 2505 / CCUG 7422 / NBRC 12200 / NCIMB 9375 / NCTC 10341 / NRRL NRS-1264 / Gibson 46</strain>
    </source>
</reference>
<organism>
    <name type="scientific">Bacillus licheniformis (strain ATCC 14580 / DSM 13 / JCM 2505 / CCUG 7422 / NBRC 12200 / NCIMB 9375 / NCTC 10341 / NRRL NRS-1264 / Gibson 46)</name>
    <dbReference type="NCBI Taxonomy" id="279010"/>
    <lineage>
        <taxon>Bacteria</taxon>
        <taxon>Bacillati</taxon>
        <taxon>Bacillota</taxon>
        <taxon>Bacilli</taxon>
        <taxon>Bacillales</taxon>
        <taxon>Bacillaceae</taxon>
        <taxon>Bacillus</taxon>
    </lineage>
</organism>
<accession>Q65PL1</accession>
<accession>Q630A2</accession>
<dbReference type="EC" id="4.3.3.6" evidence="1"/>
<dbReference type="EC" id="3.5.1.2" evidence="1"/>
<dbReference type="EMBL" id="AE017333">
    <property type="protein sequence ID" value="AAU39003.1"/>
    <property type="molecule type" value="Genomic_DNA"/>
</dbReference>
<dbReference type="EMBL" id="CP000002">
    <property type="protein sequence ID" value="AAU21656.1"/>
    <property type="molecule type" value="Genomic_DNA"/>
</dbReference>
<dbReference type="RefSeq" id="WP_003178110.1">
    <property type="nucleotide sequence ID" value="NC_006322.1"/>
</dbReference>
<dbReference type="SMR" id="Q65PL1"/>
<dbReference type="STRING" id="279010.BL02354"/>
<dbReference type="GeneID" id="92859034"/>
<dbReference type="KEGG" id="bld:BLi00017"/>
<dbReference type="KEGG" id="bli:BL02354"/>
<dbReference type="eggNOG" id="COG0311">
    <property type="taxonomic scope" value="Bacteria"/>
</dbReference>
<dbReference type="HOGENOM" id="CLU_069674_2_0_9"/>
<dbReference type="UniPathway" id="UPA00245"/>
<dbReference type="Proteomes" id="UP000000606">
    <property type="component" value="Chromosome"/>
</dbReference>
<dbReference type="GO" id="GO:0005829">
    <property type="term" value="C:cytosol"/>
    <property type="evidence" value="ECO:0007669"/>
    <property type="project" value="TreeGrafter"/>
</dbReference>
<dbReference type="GO" id="GO:1903600">
    <property type="term" value="C:glutaminase complex"/>
    <property type="evidence" value="ECO:0007669"/>
    <property type="project" value="TreeGrafter"/>
</dbReference>
<dbReference type="GO" id="GO:0004359">
    <property type="term" value="F:glutaminase activity"/>
    <property type="evidence" value="ECO:0007669"/>
    <property type="project" value="UniProtKB-UniRule"/>
</dbReference>
<dbReference type="GO" id="GO:0036381">
    <property type="term" value="F:pyridoxal 5'-phosphate synthase (glutamine hydrolysing) activity"/>
    <property type="evidence" value="ECO:0007669"/>
    <property type="project" value="UniProtKB-UniRule"/>
</dbReference>
<dbReference type="GO" id="GO:0006543">
    <property type="term" value="P:glutamine catabolic process"/>
    <property type="evidence" value="ECO:0007669"/>
    <property type="project" value="UniProtKB-UniRule"/>
</dbReference>
<dbReference type="GO" id="GO:0042823">
    <property type="term" value="P:pyridoxal phosphate biosynthetic process"/>
    <property type="evidence" value="ECO:0007669"/>
    <property type="project" value="UniProtKB-UniRule"/>
</dbReference>
<dbReference type="GO" id="GO:0008614">
    <property type="term" value="P:pyridoxine metabolic process"/>
    <property type="evidence" value="ECO:0007669"/>
    <property type="project" value="TreeGrafter"/>
</dbReference>
<dbReference type="CDD" id="cd01749">
    <property type="entry name" value="GATase1_PB"/>
    <property type="match status" value="1"/>
</dbReference>
<dbReference type="FunFam" id="3.40.50.880:FF:000010">
    <property type="entry name" value="uncharacterized protein LOC100176842 isoform X2"/>
    <property type="match status" value="1"/>
</dbReference>
<dbReference type="Gene3D" id="3.40.50.880">
    <property type="match status" value="1"/>
</dbReference>
<dbReference type="HAMAP" id="MF_01615">
    <property type="entry name" value="PdxT"/>
    <property type="match status" value="1"/>
</dbReference>
<dbReference type="InterPro" id="IPR029062">
    <property type="entry name" value="Class_I_gatase-like"/>
</dbReference>
<dbReference type="InterPro" id="IPR002161">
    <property type="entry name" value="PdxT/SNO"/>
</dbReference>
<dbReference type="InterPro" id="IPR021196">
    <property type="entry name" value="PdxT/SNO_CS"/>
</dbReference>
<dbReference type="NCBIfam" id="TIGR03800">
    <property type="entry name" value="PLP_synth_Pdx2"/>
    <property type="match status" value="1"/>
</dbReference>
<dbReference type="PANTHER" id="PTHR31559">
    <property type="entry name" value="PYRIDOXAL 5'-PHOSPHATE SYNTHASE SUBUNIT SNO"/>
    <property type="match status" value="1"/>
</dbReference>
<dbReference type="PANTHER" id="PTHR31559:SF0">
    <property type="entry name" value="PYRIDOXAL 5'-PHOSPHATE SYNTHASE SUBUNIT SNO1-RELATED"/>
    <property type="match status" value="1"/>
</dbReference>
<dbReference type="Pfam" id="PF01174">
    <property type="entry name" value="SNO"/>
    <property type="match status" value="1"/>
</dbReference>
<dbReference type="PIRSF" id="PIRSF005639">
    <property type="entry name" value="Glut_amidoT_SNO"/>
    <property type="match status" value="1"/>
</dbReference>
<dbReference type="SUPFAM" id="SSF52317">
    <property type="entry name" value="Class I glutamine amidotransferase-like"/>
    <property type="match status" value="1"/>
</dbReference>
<dbReference type="PROSITE" id="PS01236">
    <property type="entry name" value="PDXT_SNO_1"/>
    <property type="match status" value="1"/>
</dbReference>
<dbReference type="PROSITE" id="PS51130">
    <property type="entry name" value="PDXT_SNO_2"/>
    <property type="match status" value="1"/>
</dbReference>
<comment type="function">
    <text evidence="1">Catalyzes the hydrolysis of glutamine to glutamate and ammonia as part of the biosynthesis of pyridoxal 5'-phosphate. The resulting ammonia molecule is channeled to the active site of PdxS.</text>
</comment>
<comment type="catalytic activity">
    <reaction evidence="1">
        <text>aldehydo-D-ribose 5-phosphate + D-glyceraldehyde 3-phosphate + L-glutamine = pyridoxal 5'-phosphate + L-glutamate + phosphate + 3 H2O + H(+)</text>
        <dbReference type="Rhea" id="RHEA:31507"/>
        <dbReference type="ChEBI" id="CHEBI:15377"/>
        <dbReference type="ChEBI" id="CHEBI:15378"/>
        <dbReference type="ChEBI" id="CHEBI:29985"/>
        <dbReference type="ChEBI" id="CHEBI:43474"/>
        <dbReference type="ChEBI" id="CHEBI:58273"/>
        <dbReference type="ChEBI" id="CHEBI:58359"/>
        <dbReference type="ChEBI" id="CHEBI:59776"/>
        <dbReference type="ChEBI" id="CHEBI:597326"/>
        <dbReference type="EC" id="4.3.3.6"/>
    </reaction>
</comment>
<comment type="catalytic activity">
    <reaction evidence="1">
        <text>L-glutamine + H2O = L-glutamate + NH4(+)</text>
        <dbReference type="Rhea" id="RHEA:15889"/>
        <dbReference type="ChEBI" id="CHEBI:15377"/>
        <dbReference type="ChEBI" id="CHEBI:28938"/>
        <dbReference type="ChEBI" id="CHEBI:29985"/>
        <dbReference type="ChEBI" id="CHEBI:58359"/>
        <dbReference type="EC" id="3.5.1.2"/>
    </reaction>
</comment>
<comment type="pathway">
    <text evidence="1">Cofactor biosynthesis; pyridoxal 5'-phosphate biosynthesis.</text>
</comment>
<comment type="subunit">
    <text evidence="1">In the presence of PdxS, forms a dodecamer of heterodimers. Only shows activity in the heterodimer.</text>
</comment>
<comment type="similarity">
    <text evidence="1">Belongs to the glutaminase PdxT/SNO family.</text>
</comment>
<keyword id="KW-0315">Glutamine amidotransferase</keyword>
<keyword id="KW-0378">Hydrolase</keyword>
<keyword id="KW-0456">Lyase</keyword>
<keyword id="KW-0663">Pyridoxal phosphate</keyword>
<keyword id="KW-1185">Reference proteome</keyword>
<protein>
    <recommendedName>
        <fullName evidence="1">Pyridoxal 5'-phosphate synthase subunit PdxT</fullName>
        <ecNumber evidence="1">4.3.3.6</ecNumber>
    </recommendedName>
    <alternativeName>
        <fullName evidence="1">Pdx2</fullName>
    </alternativeName>
    <alternativeName>
        <fullName evidence="1">Pyridoxal 5'-phosphate synthase glutaminase subunit</fullName>
        <ecNumber evidence="1">3.5.1.2</ecNumber>
    </alternativeName>
</protein>